<comment type="function">
    <text evidence="5">Probable cell surface protease. Required to control the neuronal innervation of pharyngeal pumping.</text>
</comment>
<comment type="cofactor">
    <cofactor evidence="1">
        <name>Zn(2+)</name>
        <dbReference type="ChEBI" id="CHEBI:29105"/>
    </cofactor>
    <text evidence="1">Binds 1 zinc ion per subunit.</text>
</comment>
<comment type="subcellular location">
    <subcellularLocation>
        <location>Membrane</location>
        <topology>Single-pass type II membrane protein</topology>
    </subcellularLocation>
</comment>
<comment type="tissue specificity">
    <text evidence="5">Specifically expressed in pharyngeal cells and a single head neuron.</text>
</comment>
<comment type="similarity">
    <text evidence="3 7">Belongs to the peptidase M13 family.</text>
</comment>
<keyword id="KW-1015">Disulfide bond</keyword>
<keyword id="KW-0325">Glycoprotein</keyword>
<keyword id="KW-0378">Hydrolase</keyword>
<keyword id="KW-0472">Membrane</keyword>
<keyword id="KW-0479">Metal-binding</keyword>
<keyword id="KW-0482">Metalloprotease</keyword>
<keyword id="KW-0645">Protease</keyword>
<keyword id="KW-1185">Reference proteome</keyword>
<keyword id="KW-0735">Signal-anchor</keyword>
<keyword id="KW-0812">Transmembrane</keyword>
<keyword id="KW-1133">Transmembrane helix</keyword>
<keyword id="KW-0862">Zinc</keyword>
<dbReference type="EC" id="3.4.24.-"/>
<dbReference type="EMBL" id="Z69904">
    <property type="protein sequence ID" value="CAA93782.2"/>
    <property type="molecule type" value="Genomic_DNA"/>
</dbReference>
<dbReference type="EMBL" id="Z69902">
    <property type="protein sequence ID" value="CAA93782.2"/>
    <property type="status" value="JOINED"/>
    <property type="molecule type" value="Genomic_DNA"/>
</dbReference>
<dbReference type="PIR" id="T20003">
    <property type="entry name" value="T20003"/>
</dbReference>
<dbReference type="RefSeq" id="NP_496490.2">
    <property type="nucleotide sequence ID" value="NM_064089.7"/>
</dbReference>
<dbReference type="SMR" id="Q18673"/>
<dbReference type="FunCoup" id="Q18673">
    <property type="interactions" value="392"/>
</dbReference>
<dbReference type="STRING" id="6239.ZK20.6.1"/>
<dbReference type="MEROPS" id="M13.013"/>
<dbReference type="GlyCosmos" id="Q18673">
    <property type="glycosylation" value="8 sites, No reported glycans"/>
</dbReference>
<dbReference type="iPTMnet" id="Q18673"/>
<dbReference type="PaxDb" id="6239-ZK20.6"/>
<dbReference type="PeptideAtlas" id="Q18673"/>
<dbReference type="EnsemblMetazoa" id="ZK20.6.1">
    <property type="protein sequence ID" value="ZK20.6.1"/>
    <property type="gene ID" value="WBGene00013926"/>
</dbReference>
<dbReference type="GeneID" id="174787"/>
<dbReference type="KEGG" id="cel:CELE_ZK20.6"/>
<dbReference type="UCSC" id="ZK20.6.1">
    <property type="organism name" value="c. elegans"/>
</dbReference>
<dbReference type="AGR" id="WB:WBGene00013926"/>
<dbReference type="CTD" id="174787"/>
<dbReference type="WormBase" id="ZK20.6">
    <property type="protein sequence ID" value="CE39118"/>
    <property type="gene ID" value="WBGene00013926"/>
    <property type="gene designation" value="nep-1"/>
</dbReference>
<dbReference type="eggNOG" id="KOG3624">
    <property type="taxonomic scope" value="Eukaryota"/>
</dbReference>
<dbReference type="GeneTree" id="ENSGT00940000166608"/>
<dbReference type="HOGENOM" id="CLU_006187_8_0_1"/>
<dbReference type="InParanoid" id="Q18673"/>
<dbReference type="OMA" id="YTKLYNV"/>
<dbReference type="OrthoDB" id="6475849at2759"/>
<dbReference type="PhylomeDB" id="Q18673"/>
<dbReference type="Reactome" id="R-CEL-2022377">
    <property type="pathway name" value="Metabolism of Angiotensinogen to Angiotensins"/>
</dbReference>
<dbReference type="Reactome" id="R-CEL-5578768">
    <property type="pathway name" value="Physiological factors"/>
</dbReference>
<dbReference type="Reactome" id="R-CEL-6798695">
    <property type="pathway name" value="Neutrophil degranulation"/>
</dbReference>
<dbReference type="PRO" id="PR:Q18673"/>
<dbReference type="Proteomes" id="UP000001940">
    <property type="component" value="Chromosome II"/>
</dbReference>
<dbReference type="Bgee" id="WBGene00013926">
    <property type="expression patterns" value="Expressed in embryo and 4 other cell types or tissues"/>
</dbReference>
<dbReference type="GO" id="GO:0005886">
    <property type="term" value="C:plasma membrane"/>
    <property type="evidence" value="ECO:0000318"/>
    <property type="project" value="GO_Central"/>
</dbReference>
<dbReference type="GO" id="GO:0046872">
    <property type="term" value="F:metal ion binding"/>
    <property type="evidence" value="ECO:0007669"/>
    <property type="project" value="UniProtKB-KW"/>
</dbReference>
<dbReference type="GO" id="GO:0004222">
    <property type="term" value="F:metalloendopeptidase activity"/>
    <property type="evidence" value="ECO:0000318"/>
    <property type="project" value="GO_Central"/>
</dbReference>
<dbReference type="GO" id="GO:0016485">
    <property type="term" value="P:protein processing"/>
    <property type="evidence" value="ECO:0000318"/>
    <property type="project" value="GO_Central"/>
</dbReference>
<dbReference type="CDD" id="cd08662">
    <property type="entry name" value="M13"/>
    <property type="match status" value="1"/>
</dbReference>
<dbReference type="Gene3D" id="3.40.390.10">
    <property type="entry name" value="Collagenase (Catalytic Domain)"/>
    <property type="match status" value="1"/>
</dbReference>
<dbReference type="Gene3D" id="1.10.1380.10">
    <property type="entry name" value="Neutral endopeptidase , domain2"/>
    <property type="match status" value="1"/>
</dbReference>
<dbReference type="InterPro" id="IPR024079">
    <property type="entry name" value="MetalloPept_cat_dom_sf"/>
</dbReference>
<dbReference type="InterPro" id="IPR000718">
    <property type="entry name" value="Peptidase_M13"/>
</dbReference>
<dbReference type="InterPro" id="IPR018497">
    <property type="entry name" value="Peptidase_M13_C"/>
</dbReference>
<dbReference type="InterPro" id="IPR042089">
    <property type="entry name" value="Peptidase_M13_dom_2"/>
</dbReference>
<dbReference type="InterPro" id="IPR008753">
    <property type="entry name" value="Peptidase_M13_N"/>
</dbReference>
<dbReference type="PANTHER" id="PTHR11733:SF237">
    <property type="entry name" value="NEPRILYSIN-LIKE 4"/>
    <property type="match status" value="1"/>
</dbReference>
<dbReference type="PANTHER" id="PTHR11733">
    <property type="entry name" value="ZINC METALLOPROTEASE FAMILY M13 NEPRILYSIN-RELATED"/>
    <property type="match status" value="1"/>
</dbReference>
<dbReference type="Pfam" id="PF01431">
    <property type="entry name" value="Peptidase_M13"/>
    <property type="match status" value="1"/>
</dbReference>
<dbReference type="Pfam" id="PF05649">
    <property type="entry name" value="Peptidase_M13_N"/>
    <property type="match status" value="1"/>
</dbReference>
<dbReference type="PRINTS" id="PR00786">
    <property type="entry name" value="NEPRILYSIN"/>
</dbReference>
<dbReference type="SUPFAM" id="SSF55486">
    <property type="entry name" value="Metalloproteases ('zincins'), catalytic domain"/>
    <property type="match status" value="1"/>
</dbReference>
<dbReference type="PROSITE" id="PS51885">
    <property type="entry name" value="NEPRILYSIN"/>
    <property type="match status" value="1"/>
</dbReference>
<dbReference type="PROSITE" id="PS00142">
    <property type="entry name" value="ZINC_PROTEASE"/>
    <property type="match status" value="1"/>
</dbReference>
<feature type="chain" id="PRO_0000248421" description="Neprilysin-1">
    <location>
        <begin position="1"/>
        <end position="754"/>
    </location>
</feature>
<feature type="transmembrane region" description="Helical; Signal-anchor for type II membrane protein" evidence="2">
    <location>
        <begin position="5"/>
        <end position="27"/>
    </location>
</feature>
<feature type="domain" description="Peptidase M13" evidence="3">
    <location>
        <begin position="63"/>
        <end position="754"/>
    </location>
</feature>
<feature type="active site" evidence="3 4">
    <location>
        <position position="588"/>
    </location>
</feature>
<feature type="active site" description="Proton donor" evidence="3">
    <location>
        <position position="653"/>
    </location>
</feature>
<feature type="binding site" evidence="3 4">
    <location>
        <position position="587"/>
    </location>
    <ligand>
        <name>Zn(2+)</name>
        <dbReference type="ChEBI" id="CHEBI:29105"/>
        <note>catalytic</note>
    </ligand>
</feature>
<feature type="binding site" evidence="3 4">
    <location>
        <position position="591"/>
    </location>
    <ligand>
        <name>Zn(2+)</name>
        <dbReference type="ChEBI" id="CHEBI:29105"/>
        <note>catalytic</note>
    </ligand>
</feature>
<feature type="binding site" evidence="3">
    <location>
        <position position="649"/>
    </location>
    <ligand>
        <name>Zn(2+)</name>
        <dbReference type="ChEBI" id="CHEBI:29105"/>
        <note>catalytic</note>
    </ligand>
</feature>
<feature type="glycosylation site" description="N-linked (GlcNAc...) asparagine" evidence="2">
    <location>
        <position position="38"/>
    </location>
</feature>
<feature type="glycosylation site" description="N-linked (GlcNAc...) asparagine" evidence="6">
    <location>
        <position position="81"/>
    </location>
</feature>
<feature type="glycosylation site" description="N-linked (GlcNAc...) asparagine" evidence="6">
    <location>
        <position position="132"/>
    </location>
</feature>
<feature type="glycosylation site" description="N-linked (GlcNAc...) asparagine" evidence="6">
    <location>
        <position position="217"/>
    </location>
</feature>
<feature type="glycosylation site" description="N-linked (GlcNAc...) asparagine" evidence="6">
    <location>
        <position position="273"/>
    </location>
</feature>
<feature type="glycosylation site" description="N-linked (GlcNAc...) asparagine" evidence="2">
    <location>
        <position position="303"/>
    </location>
</feature>
<feature type="glycosylation site" description="N-linked (GlcNAc...) asparagine" evidence="6">
    <location>
        <position position="441"/>
    </location>
</feature>
<feature type="glycosylation site" description="N-linked (GlcNAc...) asparagine" evidence="6">
    <location>
        <position position="612"/>
    </location>
</feature>
<feature type="disulfide bond" evidence="3">
    <location>
        <begin position="87"/>
        <end position="739"/>
    </location>
</feature>
<feature type="disulfide bond" evidence="3">
    <location>
        <begin position="95"/>
        <end position="699"/>
    </location>
</feature>
<feature type="disulfide bond" evidence="3">
    <location>
        <begin position="151"/>
        <end position="414"/>
    </location>
</feature>
<feature type="disulfide bond" evidence="3">
    <location>
        <begin position="624"/>
        <end position="751"/>
    </location>
</feature>
<evidence type="ECO:0000250" key="1"/>
<evidence type="ECO:0000255" key="2"/>
<evidence type="ECO:0000255" key="3">
    <source>
        <dbReference type="PROSITE-ProRule" id="PRU01233"/>
    </source>
</evidence>
<evidence type="ECO:0000255" key="4">
    <source>
        <dbReference type="PROSITE-ProRule" id="PRU10095"/>
    </source>
</evidence>
<evidence type="ECO:0000269" key="5">
    <source>
    </source>
</evidence>
<evidence type="ECO:0000269" key="6">
    <source>
    </source>
</evidence>
<evidence type="ECO:0000305" key="7"/>
<gene>
    <name type="primary">nep-1</name>
    <name type="ORF">ZK20.6</name>
</gene>
<name>NEPL1_CAEEL</name>
<sequence length="754" mass="86945">MYTRFGPPIVFLISCYALILCGTVDALPRAPYFNDDINKTTTTSEDKTVGNTVVEEEKKTYTVGDSEGYQEASRLLQKSLNLSLDPCDDFFEYACRAWVDSHPIPDDLTSYSQFTATREKVLAEMRKLYEDNTSIPTSKSIALIKQIYNTCMDTEKHNAVGARDLLEKIKTYGYWPMVHNEKWRESTFDLTKLLSNTIQSRDVSVFFDFGPAEDSRNVSRRLLSFDQGSLGLGYSTRDYYLDEKKYEKQMKAYRKYTIGKVRYYTEDAGMAVNESKIESDVDEIIAFEKEWAQILVAEEDRRNYTKLYNVRRFDDLKEYMSIIDWKKLTLSTTPFLVHSYLKTNPSIIISDVEYLQKMNTLLQNTDPRIVTNYILLRWAGSWSQEIGKKYEDLQQEFAFQMYGRKQRQPRWKDCVSSAGGKLSYASGSMYVRKYFDANAKNTTLDMITDLQEAFRNMMHANDWMDAETKKYALEKADQMLKQIGYPDFILNDEKLDDWYKGLEGAPEDSFSQLVEKSIQWRNNFYYRRLLEPVNRFEFISSAAVVNAFYSPTRNAIAFPAGILQQPFFDARFPKALNYGGIGAVIGHEITHGFDDTGRQFDNVGNLRDWWDNTTSSKFNERTQCIIEQYADVKLRGTDLRINGKLTQGENIADNGGIKQAFKAYKSYLEKHGGQEARLPQFESLTNEQLFFVGYAQVWCGAKTPETKTLLLLTDPHSPETARVNTVLTNQPEFAEAFKCPAGSPMNPTKRCVVW</sequence>
<reference key="1">
    <citation type="journal article" date="1998" name="Science">
        <title>Genome sequence of the nematode C. elegans: a platform for investigating biology.</title>
        <authorList>
            <consortium name="The C. elegans sequencing consortium"/>
        </authorList>
    </citation>
    <scope>NUCLEOTIDE SEQUENCE [LARGE SCALE GENOMIC DNA]</scope>
    <source>
        <strain>Bristol N2</strain>
    </source>
</reference>
<reference key="2">
    <citation type="journal article" date="2005" name="J. Mol. Biol.">
        <title>Caenorhabditis elegans neprilysin NEP-1: an effector of locomotion and pharyngeal pumping.</title>
        <authorList>
            <person name="Spanier B."/>
            <person name="Stuerzenbaum S.R."/>
            <person name="Holden-Dye L.M."/>
            <person name="Baumeister R."/>
        </authorList>
    </citation>
    <scope>FUNCTION</scope>
    <scope>TISSUE SPECIFICITY</scope>
</reference>
<reference key="3">
    <citation type="journal article" date="2007" name="Mol. Cell. Proteomics">
        <title>Proteomics reveals N-linked glycoprotein diversity in Caenorhabditis elegans and suggests an atypical translocation mechanism for integral membrane proteins.</title>
        <authorList>
            <person name="Kaji H."/>
            <person name="Kamiie J."/>
            <person name="Kawakami H."/>
            <person name="Kido K."/>
            <person name="Yamauchi Y."/>
            <person name="Shinkawa T."/>
            <person name="Taoka M."/>
            <person name="Takahashi N."/>
            <person name="Isobe T."/>
        </authorList>
    </citation>
    <scope>GLYCOSYLATION [LARGE SCALE ANALYSIS] AT ASN-81; ASN-132; ASN-217; ASN-273; ASN-441 AND ASN-612</scope>
    <scope>IDENTIFICATION BY MASS SPECTROMETRY</scope>
    <source>
        <strain>Bristol N2</strain>
    </source>
</reference>
<accession>Q18673</accession>
<accession>Q23453</accession>
<organism>
    <name type="scientific">Caenorhabditis elegans</name>
    <dbReference type="NCBI Taxonomy" id="6239"/>
    <lineage>
        <taxon>Eukaryota</taxon>
        <taxon>Metazoa</taxon>
        <taxon>Ecdysozoa</taxon>
        <taxon>Nematoda</taxon>
        <taxon>Chromadorea</taxon>
        <taxon>Rhabditida</taxon>
        <taxon>Rhabditina</taxon>
        <taxon>Rhabditomorpha</taxon>
        <taxon>Rhabditoidea</taxon>
        <taxon>Rhabditidae</taxon>
        <taxon>Peloderinae</taxon>
        <taxon>Caenorhabditis</taxon>
    </lineage>
</organism>
<proteinExistence type="evidence at protein level"/>
<protein>
    <recommendedName>
        <fullName>Neprilysin-1</fullName>
        <ecNumber>3.4.24.-</ecNumber>
    </recommendedName>
</protein>